<dbReference type="EMBL" id="CP000572">
    <property type="protein sequence ID" value="ABN90813.1"/>
    <property type="molecule type" value="Genomic_DNA"/>
</dbReference>
<dbReference type="RefSeq" id="WP_004521339.1">
    <property type="nucleotide sequence ID" value="NC_009076.1"/>
</dbReference>
<dbReference type="SMR" id="A3NVW0"/>
<dbReference type="KEGG" id="bpl:BURPS1106A_2217"/>
<dbReference type="HOGENOM" id="CLU_025113_0_1_4"/>
<dbReference type="UniPathway" id="UPA00031">
    <property type="reaction ID" value="UER00006"/>
</dbReference>
<dbReference type="Proteomes" id="UP000006738">
    <property type="component" value="Chromosome I"/>
</dbReference>
<dbReference type="GO" id="GO:0005737">
    <property type="term" value="C:cytoplasm"/>
    <property type="evidence" value="ECO:0007669"/>
    <property type="project" value="UniProtKB-SubCell"/>
</dbReference>
<dbReference type="GO" id="GO:0004821">
    <property type="term" value="F:histidine-tRNA ligase activity"/>
    <property type="evidence" value="ECO:0007669"/>
    <property type="project" value="TreeGrafter"/>
</dbReference>
<dbReference type="GO" id="GO:0006427">
    <property type="term" value="P:histidyl-tRNA aminoacylation"/>
    <property type="evidence" value="ECO:0007669"/>
    <property type="project" value="TreeGrafter"/>
</dbReference>
<dbReference type="GO" id="GO:0000105">
    <property type="term" value="P:L-histidine biosynthetic process"/>
    <property type="evidence" value="ECO:0007669"/>
    <property type="project" value="UniProtKB-UniRule"/>
</dbReference>
<dbReference type="CDD" id="cd00773">
    <property type="entry name" value="HisRS-like_core"/>
    <property type="match status" value="1"/>
</dbReference>
<dbReference type="Gene3D" id="3.30.930.10">
    <property type="entry name" value="Bira Bifunctional Protein, Domain 2"/>
    <property type="match status" value="1"/>
</dbReference>
<dbReference type="HAMAP" id="MF_00125">
    <property type="entry name" value="HisZ"/>
    <property type="match status" value="1"/>
</dbReference>
<dbReference type="InterPro" id="IPR045864">
    <property type="entry name" value="aa-tRNA-synth_II/BPL/LPL"/>
</dbReference>
<dbReference type="InterPro" id="IPR041715">
    <property type="entry name" value="HisRS-like_core"/>
</dbReference>
<dbReference type="InterPro" id="IPR004516">
    <property type="entry name" value="HisRS/HisZ"/>
</dbReference>
<dbReference type="InterPro" id="IPR004517">
    <property type="entry name" value="HisZ"/>
</dbReference>
<dbReference type="NCBIfam" id="TIGR00443">
    <property type="entry name" value="hisZ_biosyn_reg"/>
    <property type="match status" value="1"/>
</dbReference>
<dbReference type="NCBIfam" id="NF008935">
    <property type="entry name" value="PRK12292.1-1"/>
    <property type="match status" value="1"/>
</dbReference>
<dbReference type="NCBIfam" id="NF009086">
    <property type="entry name" value="PRK12421.1"/>
    <property type="match status" value="1"/>
</dbReference>
<dbReference type="PANTHER" id="PTHR43707:SF1">
    <property type="entry name" value="HISTIDINE--TRNA LIGASE, MITOCHONDRIAL-RELATED"/>
    <property type="match status" value="1"/>
</dbReference>
<dbReference type="PANTHER" id="PTHR43707">
    <property type="entry name" value="HISTIDYL-TRNA SYNTHETASE"/>
    <property type="match status" value="1"/>
</dbReference>
<dbReference type="Pfam" id="PF13393">
    <property type="entry name" value="tRNA-synt_His"/>
    <property type="match status" value="1"/>
</dbReference>
<dbReference type="PIRSF" id="PIRSF001549">
    <property type="entry name" value="His-tRNA_synth"/>
    <property type="match status" value="1"/>
</dbReference>
<dbReference type="SUPFAM" id="SSF55681">
    <property type="entry name" value="Class II aaRS and biotin synthetases"/>
    <property type="match status" value="1"/>
</dbReference>
<accession>A3NVW0</accession>
<evidence type="ECO:0000255" key="1">
    <source>
        <dbReference type="HAMAP-Rule" id="MF_00125"/>
    </source>
</evidence>
<name>HISZ_BURP0</name>
<feature type="chain" id="PRO_1000016253" description="ATP phosphoribosyltransferase regulatory subunit">
    <location>
        <begin position="1"/>
        <end position="382"/>
    </location>
</feature>
<comment type="function">
    <text evidence="1">Required for the first step of histidine biosynthesis. May allow the feedback regulation of ATP phosphoribosyltransferase activity by histidine.</text>
</comment>
<comment type="pathway">
    <text evidence="1">Amino-acid biosynthesis; L-histidine biosynthesis; L-histidine from 5-phospho-alpha-D-ribose 1-diphosphate: step 1/9.</text>
</comment>
<comment type="subunit">
    <text evidence="1">Heteromultimer composed of HisG and HisZ subunits.</text>
</comment>
<comment type="subcellular location">
    <subcellularLocation>
        <location evidence="1">Cytoplasm</location>
    </subcellularLocation>
</comment>
<comment type="miscellaneous">
    <text>This function is generally fulfilled by the C-terminal part of HisG, which is missing in some bacteria such as this one.</text>
</comment>
<comment type="similarity">
    <text evidence="1">Belongs to the class-II aminoacyl-tRNA synthetase family. HisZ subfamily.</text>
</comment>
<keyword id="KW-0028">Amino-acid biosynthesis</keyword>
<keyword id="KW-0963">Cytoplasm</keyword>
<keyword id="KW-0368">Histidine biosynthesis</keyword>
<protein>
    <recommendedName>
        <fullName evidence="1">ATP phosphoribosyltransferase regulatory subunit</fullName>
    </recommendedName>
</protein>
<sequence>MSTWLLPENIADVLPSEARKIEELRRRLLDRFRSYGYEMVMPPLLEYLESLLTSGGNELRLRTFKLVDQVSGRTLGLRADMTPQVARIDAHLLNRQGVTRLCYAGPVLHTRPRGLHASREQLQIGAEIYGHAGLEADQEIQQLMLDALHLTGLKKIRLDLCHAGVLAALFARDAAAAERGEALYEALAGKDVPRLNELTDDLGADTRAALRALPRLYGDASVLDDARRLLPALPEITRALDDLAHLAAQVKDAEVAIDLADLRGYAYHSGAMFAAYVDGVPNAVAHGGRYDHVGQAYGRARPATGFSLDLREIARISPVEARGAAILAPWKQDDALRAAVGALRDAGEVVIQALPGHDHVLDEFACDRALVERDGAWVIEPR</sequence>
<reference key="1">
    <citation type="journal article" date="2010" name="Genome Biol. Evol.">
        <title>Continuing evolution of Burkholderia mallei through genome reduction and large-scale rearrangements.</title>
        <authorList>
            <person name="Losada L."/>
            <person name="Ronning C.M."/>
            <person name="DeShazer D."/>
            <person name="Woods D."/>
            <person name="Fedorova N."/>
            <person name="Kim H.S."/>
            <person name="Shabalina S.A."/>
            <person name="Pearson T.R."/>
            <person name="Brinkac L."/>
            <person name="Tan P."/>
            <person name="Nandi T."/>
            <person name="Crabtree J."/>
            <person name="Badger J."/>
            <person name="Beckstrom-Sternberg S."/>
            <person name="Saqib M."/>
            <person name="Schutzer S.E."/>
            <person name="Keim P."/>
            <person name="Nierman W.C."/>
        </authorList>
    </citation>
    <scope>NUCLEOTIDE SEQUENCE [LARGE SCALE GENOMIC DNA]</scope>
    <source>
        <strain>1106a</strain>
    </source>
</reference>
<proteinExistence type="inferred from homology"/>
<gene>
    <name evidence="1" type="primary">hisZ</name>
    <name type="ordered locus">BURPS1106A_2217</name>
</gene>
<organism>
    <name type="scientific">Burkholderia pseudomallei (strain 1106a)</name>
    <dbReference type="NCBI Taxonomy" id="357348"/>
    <lineage>
        <taxon>Bacteria</taxon>
        <taxon>Pseudomonadati</taxon>
        <taxon>Pseudomonadota</taxon>
        <taxon>Betaproteobacteria</taxon>
        <taxon>Burkholderiales</taxon>
        <taxon>Burkholderiaceae</taxon>
        <taxon>Burkholderia</taxon>
        <taxon>pseudomallei group</taxon>
    </lineage>
</organism>